<organism>
    <name type="scientific">Acorus calamus</name>
    <name type="common">Sweet flag</name>
    <dbReference type="NCBI Taxonomy" id="4465"/>
    <lineage>
        <taxon>Eukaryota</taxon>
        <taxon>Viridiplantae</taxon>
        <taxon>Streptophyta</taxon>
        <taxon>Embryophyta</taxon>
        <taxon>Tracheophyta</taxon>
        <taxon>Spermatophyta</taxon>
        <taxon>Magnoliopsida</taxon>
        <taxon>Liliopsida</taxon>
        <taxon>Acoraceae</taxon>
        <taxon>Acorus</taxon>
    </lineage>
</organism>
<proteinExistence type="inferred from homology"/>
<feature type="chain" id="PRO_0000360299" description="NAD(P)H-quinone oxidoreductase subunit 4L, chloroplastic">
    <location>
        <begin position="1"/>
        <end position="101"/>
    </location>
</feature>
<feature type="transmembrane region" description="Helical" evidence="1">
    <location>
        <begin position="2"/>
        <end position="22"/>
    </location>
</feature>
<feature type="transmembrane region" description="Helical" evidence="1">
    <location>
        <begin position="32"/>
        <end position="52"/>
    </location>
</feature>
<feature type="transmembrane region" description="Helical" evidence="1">
    <location>
        <begin position="61"/>
        <end position="81"/>
    </location>
</feature>
<accession>Q3V4Y2</accession>
<comment type="function">
    <text evidence="1">NDH shuttles electrons from NAD(P)H:plastoquinone, via FMN and iron-sulfur (Fe-S) centers, to quinones in the photosynthetic chain and possibly in a chloroplast respiratory chain. The immediate electron acceptor for the enzyme in this species is believed to be plastoquinone. Couples the redox reaction to proton translocation, and thus conserves the redox energy in a proton gradient.</text>
</comment>
<comment type="catalytic activity">
    <reaction evidence="1">
        <text>a plastoquinone + NADH + (n+1) H(+)(in) = a plastoquinol + NAD(+) + n H(+)(out)</text>
        <dbReference type="Rhea" id="RHEA:42608"/>
        <dbReference type="Rhea" id="RHEA-COMP:9561"/>
        <dbReference type="Rhea" id="RHEA-COMP:9562"/>
        <dbReference type="ChEBI" id="CHEBI:15378"/>
        <dbReference type="ChEBI" id="CHEBI:17757"/>
        <dbReference type="ChEBI" id="CHEBI:57540"/>
        <dbReference type="ChEBI" id="CHEBI:57945"/>
        <dbReference type="ChEBI" id="CHEBI:62192"/>
    </reaction>
</comment>
<comment type="catalytic activity">
    <reaction evidence="1">
        <text>a plastoquinone + NADPH + (n+1) H(+)(in) = a plastoquinol + NADP(+) + n H(+)(out)</text>
        <dbReference type="Rhea" id="RHEA:42612"/>
        <dbReference type="Rhea" id="RHEA-COMP:9561"/>
        <dbReference type="Rhea" id="RHEA-COMP:9562"/>
        <dbReference type="ChEBI" id="CHEBI:15378"/>
        <dbReference type="ChEBI" id="CHEBI:17757"/>
        <dbReference type="ChEBI" id="CHEBI:57783"/>
        <dbReference type="ChEBI" id="CHEBI:58349"/>
        <dbReference type="ChEBI" id="CHEBI:62192"/>
    </reaction>
</comment>
<comment type="subunit">
    <text evidence="1">NDH is composed of at least 16 different subunits, 5 of which are encoded in the nucleus.</text>
</comment>
<comment type="subcellular location">
    <subcellularLocation>
        <location evidence="1">Plastid</location>
        <location evidence="1">Chloroplast thylakoid membrane</location>
        <topology evidence="1">Multi-pass membrane protein</topology>
    </subcellularLocation>
</comment>
<comment type="similarity">
    <text evidence="1">Belongs to the complex I subunit 4L family.</text>
</comment>
<reference key="1">
    <citation type="journal article" date="2005" name="Mol. Biol. Evol.">
        <title>Analysis of Acorus calamus chloroplast genome and its phylogenetic implications.</title>
        <authorList>
            <person name="Goremykin V.V."/>
            <person name="Holland B."/>
            <person name="Hirsch-Ernst K.I."/>
            <person name="Hellwig F.H."/>
        </authorList>
    </citation>
    <scope>NUCLEOTIDE SEQUENCE [LARGE SCALE GENOMIC DNA]</scope>
</reference>
<protein>
    <recommendedName>
        <fullName evidence="1">NAD(P)H-quinone oxidoreductase subunit 4L, chloroplastic</fullName>
        <ecNumber evidence="1">7.1.1.-</ecNumber>
    </recommendedName>
    <alternativeName>
        <fullName evidence="1">NAD(P)H dehydrogenase subunit 4L</fullName>
    </alternativeName>
    <alternativeName>
        <fullName evidence="1">NADH-plastoquinone oxidoreductase subunit 4L</fullName>
    </alternativeName>
</protein>
<sequence>MMLEYVLFLSAYLFSIGIYGLITSRNMVRALMCLELILNAVNINLVTFSDLFDSRQLKGDIFSIFVIAIAAAEAAIGPAIVSSIYRNRKSIRINQSNLLNK</sequence>
<geneLocation type="chloroplast"/>
<keyword id="KW-0150">Chloroplast</keyword>
<keyword id="KW-0472">Membrane</keyword>
<keyword id="KW-0520">NAD</keyword>
<keyword id="KW-0521">NADP</keyword>
<keyword id="KW-0934">Plastid</keyword>
<keyword id="KW-0618">Plastoquinone</keyword>
<keyword id="KW-0874">Quinone</keyword>
<keyword id="KW-0793">Thylakoid</keyword>
<keyword id="KW-1278">Translocase</keyword>
<keyword id="KW-0812">Transmembrane</keyword>
<keyword id="KW-1133">Transmembrane helix</keyword>
<keyword id="KW-0813">Transport</keyword>
<dbReference type="EC" id="7.1.1.-" evidence="1"/>
<dbReference type="EMBL" id="AJ879453">
    <property type="protein sequence ID" value="CAI53846.1"/>
    <property type="molecule type" value="Genomic_DNA"/>
</dbReference>
<dbReference type="RefSeq" id="YP_319815.1">
    <property type="nucleotide sequence ID" value="NC_007407.1"/>
</dbReference>
<dbReference type="SMR" id="Q3V4Y2"/>
<dbReference type="GeneID" id="3677482"/>
<dbReference type="GO" id="GO:0009535">
    <property type="term" value="C:chloroplast thylakoid membrane"/>
    <property type="evidence" value="ECO:0007669"/>
    <property type="project" value="UniProtKB-SubCell"/>
</dbReference>
<dbReference type="GO" id="GO:0030964">
    <property type="term" value="C:NADH dehydrogenase complex"/>
    <property type="evidence" value="ECO:0007669"/>
    <property type="project" value="TreeGrafter"/>
</dbReference>
<dbReference type="GO" id="GO:0016655">
    <property type="term" value="F:oxidoreductase activity, acting on NAD(P)H, quinone or similar compound as acceptor"/>
    <property type="evidence" value="ECO:0007669"/>
    <property type="project" value="UniProtKB-UniRule"/>
</dbReference>
<dbReference type="GO" id="GO:0048038">
    <property type="term" value="F:quinone binding"/>
    <property type="evidence" value="ECO:0007669"/>
    <property type="project" value="UniProtKB-KW"/>
</dbReference>
<dbReference type="GO" id="GO:0042773">
    <property type="term" value="P:ATP synthesis coupled electron transport"/>
    <property type="evidence" value="ECO:0007669"/>
    <property type="project" value="InterPro"/>
</dbReference>
<dbReference type="GO" id="GO:0019684">
    <property type="term" value="P:photosynthesis, light reaction"/>
    <property type="evidence" value="ECO:0007669"/>
    <property type="project" value="UniProtKB-UniRule"/>
</dbReference>
<dbReference type="FunFam" id="1.10.287.3510:FF:000001">
    <property type="entry name" value="NADH-quinone oxidoreductase subunit K"/>
    <property type="match status" value="1"/>
</dbReference>
<dbReference type="Gene3D" id="1.10.287.3510">
    <property type="match status" value="1"/>
</dbReference>
<dbReference type="HAMAP" id="MF_01456">
    <property type="entry name" value="NDH1_NuoK"/>
    <property type="match status" value="1"/>
</dbReference>
<dbReference type="InterPro" id="IPR001133">
    <property type="entry name" value="NADH_UbQ_OxRdtase_chain4L/K"/>
</dbReference>
<dbReference type="InterPro" id="IPR039428">
    <property type="entry name" value="NUOK/Mnh_C1-like"/>
</dbReference>
<dbReference type="NCBIfam" id="NF004320">
    <property type="entry name" value="PRK05715.1-2"/>
    <property type="match status" value="1"/>
</dbReference>
<dbReference type="NCBIfam" id="NF004322">
    <property type="entry name" value="PRK05715.1-4"/>
    <property type="match status" value="1"/>
</dbReference>
<dbReference type="PANTHER" id="PTHR11434:SF16">
    <property type="entry name" value="NADH-UBIQUINONE OXIDOREDUCTASE CHAIN 4L"/>
    <property type="match status" value="1"/>
</dbReference>
<dbReference type="PANTHER" id="PTHR11434">
    <property type="entry name" value="NADH-UBIQUINONE OXIDOREDUCTASE SUBUNIT ND4L"/>
    <property type="match status" value="1"/>
</dbReference>
<dbReference type="Pfam" id="PF00420">
    <property type="entry name" value="Oxidored_q2"/>
    <property type="match status" value="1"/>
</dbReference>
<name>NU4LC_ACOCL</name>
<gene>
    <name evidence="1" type="primary">ndhE</name>
</gene>
<evidence type="ECO:0000255" key="1">
    <source>
        <dbReference type="HAMAP-Rule" id="MF_01456"/>
    </source>
</evidence>